<dbReference type="EC" id="2.1.3.2" evidence="1"/>
<dbReference type="EMBL" id="CU928160">
    <property type="protein sequence ID" value="CAR01219.1"/>
    <property type="molecule type" value="Genomic_DNA"/>
</dbReference>
<dbReference type="RefSeq" id="WP_000013046.1">
    <property type="nucleotide sequence ID" value="NC_011741.1"/>
</dbReference>
<dbReference type="SMR" id="B7M9K5"/>
<dbReference type="GeneID" id="93777579"/>
<dbReference type="KEGG" id="ecr:ECIAI1_4477"/>
<dbReference type="HOGENOM" id="CLU_043846_1_2_6"/>
<dbReference type="UniPathway" id="UPA00070">
    <property type="reaction ID" value="UER00116"/>
</dbReference>
<dbReference type="GO" id="GO:0005829">
    <property type="term" value="C:cytosol"/>
    <property type="evidence" value="ECO:0007669"/>
    <property type="project" value="TreeGrafter"/>
</dbReference>
<dbReference type="GO" id="GO:0016597">
    <property type="term" value="F:amino acid binding"/>
    <property type="evidence" value="ECO:0007669"/>
    <property type="project" value="InterPro"/>
</dbReference>
<dbReference type="GO" id="GO:0004070">
    <property type="term" value="F:aspartate carbamoyltransferase activity"/>
    <property type="evidence" value="ECO:0007669"/>
    <property type="project" value="UniProtKB-UniRule"/>
</dbReference>
<dbReference type="GO" id="GO:0006207">
    <property type="term" value="P:'de novo' pyrimidine nucleobase biosynthetic process"/>
    <property type="evidence" value="ECO:0007669"/>
    <property type="project" value="InterPro"/>
</dbReference>
<dbReference type="GO" id="GO:0044205">
    <property type="term" value="P:'de novo' UMP biosynthetic process"/>
    <property type="evidence" value="ECO:0007669"/>
    <property type="project" value="UniProtKB-UniRule"/>
</dbReference>
<dbReference type="GO" id="GO:0006520">
    <property type="term" value="P:amino acid metabolic process"/>
    <property type="evidence" value="ECO:0007669"/>
    <property type="project" value="InterPro"/>
</dbReference>
<dbReference type="FunFam" id="3.40.50.1370:FF:000001">
    <property type="entry name" value="Aspartate carbamoyltransferase"/>
    <property type="match status" value="1"/>
</dbReference>
<dbReference type="FunFam" id="3.40.50.1370:FF:000002">
    <property type="entry name" value="Aspartate carbamoyltransferase 2"/>
    <property type="match status" value="1"/>
</dbReference>
<dbReference type="Gene3D" id="3.40.50.1370">
    <property type="entry name" value="Aspartate/ornithine carbamoyltransferase"/>
    <property type="match status" value="2"/>
</dbReference>
<dbReference type="HAMAP" id="MF_00001">
    <property type="entry name" value="Asp_carb_tr"/>
    <property type="match status" value="1"/>
</dbReference>
<dbReference type="InterPro" id="IPR006132">
    <property type="entry name" value="Asp/Orn_carbamoyltranf_P-bd"/>
</dbReference>
<dbReference type="InterPro" id="IPR006130">
    <property type="entry name" value="Asp/Orn_carbamoylTrfase"/>
</dbReference>
<dbReference type="InterPro" id="IPR036901">
    <property type="entry name" value="Asp/Orn_carbamoylTrfase_sf"/>
</dbReference>
<dbReference type="InterPro" id="IPR002082">
    <property type="entry name" value="Asp_carbamoyltransf"/>
</dbReference>
<dbReference type="InterPro" id="IPR006131">
    <property type="entry name" value="Asp_carbamoyltransf_Asp/Orn-bd"/>
</dbReference>
<dbReference type="NCBIfam" id="TIGR00670">
    <property type="entry name" value="asp_carb_tr"/>
    <property type="match status" value="1"/>
</dbReference>
<dbReference type="NCBIfam" id="NF002032">
    <property type="entry name" value="PRK00856.1"/>
    <property type="match status" value="1"/>
</dbReference>
<dbReference type="PANTHER" id="PTHR45753:SF6">
    <property type="entry name" value="ASPARTATE CARBAMOYLTRANSFERASE"/>
    <property type="match status" value="1"/>
</dbReference>
<dbReference type="PANTHER" id="PTHR45753">
    <property type="entry name" value="ORNITHINE CARBAMOYLTRANSFERASE, MITOCHONDRIAL"/>
    <property type="match status" value="1"/>
</dbReference>
<dbReference type="Pfam" id="PF00185">
    <property type="entry name" value="OTCace"/>
    <property type="match status" value="1"/>
</dbReference>
<dbReference type="Pfam" id="PF02729">
    <property type="entry name" value="OTCace_N"/>
    <property type="match status" value="1"/>
</dbReference>
<dbReference type="PRINTS" id="PR00100">
    <property type="entry name" value="AOTCASE"/>
</dbReference>
<dbReference type="PRINTS" id="PR00101">
    <property type="entry name" value="ATCASE"/>
</dbReference>
<dbReference type="SUPFAM" id="SSF53671">
    <property type="entry name" value="Aspartate/ornithine carbamoyltransferase"/>
    <property type="match status" value="1"/>
</dbReference>
<dbReference type="PROSITE" id="PS00097">
    <property type="entry name" value="CARBAMOYLTRANSFERASE"/>
    <property type="match status" value="1"/>
</dbReference>
<organism>
    <name type="scientific">Escherichia coli O8 (strain IAI1)</name>
    <dbReference type="NCBI Taxonomy" id="585034"/>
    <lineage>
        <taxon>Bacteria</taxon>
        <taxon>Pseudomonadati</taxon>
        <taxon>Pseudomonadota</taxon>
        <taxon>Gammaproteobacteria</taxon>
        <taxon>Enterobacterales</taxon>
        <taxon>Enterobacteriaceae</taxon>
        <taxon>Escherichia</taxon>
    </lineage>
</organism>
<evidence type="ECO:0000255" key="1">
    <source>
        <dbReference type="HAMAP-Rule" id="MF_00001"/>
    </source>
</evidence>
<reference key="1">
    <citation type="journal article" date="2009" name="PLoS Genet.">
        <title>Organised genome dynamics in the Escherichia coli species results in highly diverse adaptive paths.</title>
        <authorList>
            <person name="Touchon M."/>
            <person name="Hoede C."/>
            <person name="Tenaillon O."/>
            <person name="Barbe V."/>
            <person name="Baeriswyl S."/>
            <person name="Bidet P."/>
            <person name="Bingen E."/>
            <person name="Bonacorsi S."/>
            <person name="Bouchier C."/>
            <person name="Bouvet O."/>
            <person name="Calteau A."/>
            <person name="Chiapello H."/>
            <person name="Clermont O."/>
            <person name="Cruveiller S."/>
            <person name="Danchin A."/>
            <person name="Diard M."/>
            <person name="Dossat C."/>
            <person name="Karoui M.E."/>
            <person name="Frapy E."/>
            <person name="Garry L."/>
            <person name="Ghigo J.M."/>
            <person name="Gilles A.M."/>
            <person name="Johnson J."/>
            <person name="Le Bouguenec C."/>
            <person name="Lescat M."/>
            <person name="Mangenot S."/>
            <person name="Martinez-Jehanne V."/>
            <person name="Matic I."/>
            <person name="Nassif X."/>
            <person name="Oztas S."/>
            <person name="Petit M.A."/>
            <person name="Pichon C."/>
            <person name="Rouy Z."/>
            <person name="Ruf C.S."/>
            <person name="Schneider D."/>
            <person name="Tourret J."/>
            <person name="Vacherie B."/>
            <person name="Vallenet D."/>
            <person name="Medigue C."/>
            <person name="Rocha E.P.C."/>
            <person name="Denamur E."/>
        </authorList>
    </citation>
    <scope>NUCLEOTIDE SEQUENCE [LARGE SCALE GENOMIC DNA]</scope>
    <source>
        <strain>IAI1</strain>
    </source>
</reference>
<feature type="chain" id="PRO_1000191908" description="Aspartate carbamoyltransferase catalytic subunit">
    <location>
        <begin position="1"/>
        <end position="311"/>
    </location>
</feature>
<feature type="binding site" evidence="1">
    <location>
        <position position="55"/>
    </location>
    <ligand>
        <name>carbamoyl phosphate</name>
        <dbReference type="ChEBI" id="CHEBI:58228"/>
    </ligand>
</feature>
<feature type="binding site" evidence="1">
    <location>
        <position position="56"/>
    </location>
    <ligand>
        <name>carbamoyl phosphate</name>
        <dbReference type="ChEBI" id="CHEBI:58228"/>
    </ligand>
</feature>
<feature type="binding site" evidence="1">
    <location>
        <position position="85"/>
    </location>
    <ligand>
        <name>L-aspartate</name>
        <dbReference type="ChEBI" id="CHEBI:29991"/>
    </ligand>
</feature>
<feature type="binding site" evidence="1">
    <location>
        <position position="106"/>
    </location>
    <ligand>
        <name>carbamoyl phosphate</name>
        <dbReference type="ChEBI" id="CHEBI:58228"/>
    </ligand>
</feature>
<feature type="binding site" evidence="1">
    <location>
        <position position="135"/>
    </location>
    <ligand>
        <name>carbamoyl phosphate</name>
        <dbReference type="ChEBI" id="CHEBI:58228"/>
    </ligand>
</feature>
<feature type="binding site" evidence="1">
    <location>
        <position position="138"/>
    </location>
    <ligand>
        <name>carbamoyl phosphate</name>
        <dbReference type="ChEBI" id="CHEBI:58228"/>
    </ligand>
</feature>
<feature type="binding site" evidence="1">
    <location>
        <position position="168"/>
    </location>
    <ligand>
        <name>L-aspartate</name>
        <dbReference type="ChEBI" id="CHEBI:29991"/>
    </ligand>
</feature>
<feature type="binding site" evidence="1">
    <location>
        <position position="230"/>
    </location>
    <ligand>
        <name>L-aspartate</name>
        <dbReference type="ChEBI" id="CHEBI:29991"/>
    </ligand>
</feature>
<feature type="binding site" evidence="1">
    <location>
        <position position="268"/>
    </location>
    <ligand>
        <name>carbamoyl phosphate</name>
        <dbReference type="ChEBI" id="CHEBI:58228"/>
    </ligand>
</feature>
<feature type="binding site" evidence="1">
    <location>
        <position position="269"/>
    </location>
    <ligand>
        <name>carbamoyl phosphate</name>
        <dbReference type="ChEBI" id="CHEBI:58228"/>
    </ligand>
</feature>
<name>PYRB_ECO8A</name>
<gene>
    <name evidence="1" type="primary">pyrB</name>
    <name type="ordered locus">ECIAI1_4477</name>
</gene>
<accession>B7M9K5</accession>
<sequence length="311" mass="34427">MANPLYQKHIISINDLSRDDLNLVLATAAKLKANPQPELLKHKVIASCFFEASTRTRLSFETSMHRLGASVVGFSDSANTSLGKKGETLADTISVISTYVDAIVMRHPQEGAARLATEFSGNVPVLNAGDGSNQHPTQTLLDLFTIQETQGRLDNLHVAMVGDLKYGRTVHSLTQALAKFDGNRFYFIAPDALAMPQYILDMLDEKGIAWSLHSSIEEVMAEVDILYMTRVQKERLDPSEYANVKAQFVLRASDLHNAKANMKVLHPLPRVDEIATDVDKTPHAWYFQQAGNGIFARQALLALVLNRDLVL</sequence>
<comment type="function">
    <text evidence="1">Catalyzes the condensation of carbamoyl phosphate and aspartate to form carbamoyl aspartate and inorganic phosphate, the committed step in the de novo pyrimidine nucleotide biosynthesis pathway.</text>
</comment>
<comment type="catalytic activity">
    <reaction evidence="1">
        <text>carbamoyl phosphate + L-aspartate = N-carbamoyl-L-aspartate + phosphate + H(+)</text>
        <dbReference type="Rhea" id="RHEA:20013"/>
        <dbReference type="ChEBI" id="CHEBI:15378"/>
        <dbReference type="ChEBI" id="CHEBI:29991"/>
        <dbReference type="ChEBI" id="CHEBI:32814"/>
        <dbReference type="ChEBI" id="CHEBI:43474"/>
        <dbReference type="ChEBI" id="CHEBI:58228"/>
        <dbReference type="EC" id="2.1.3.2"/>
    </reaction>
</comment>
<comment type="pathway">
    <text evidence="1">Pyrimidine metabolism; UMP biosynthesis via de novo pathway; (S)-dihydroorotate from bicarbonate: step 2/3.</text>
</comment>
<comment type="subunit">
    <text evidence="1">Heterododecamer (2C3:3R2) of six catalytic PyrB chains organized as two trimers (C3), and six regulatory PyrI chains organized as three dimers (R2).</text>
</comment>
<comment type="similarity">
    <text evidence="1">Belongs to the aspartate/ornithine carbamoyltransferase superfamily. ATCase family.</text>
</comment>
<keyword id="KW-0665">Pyrimidine biosynthesis</keyword>
<keyword id="KW-0808">Transferase</keyword>
<protein>
    <recommendedName>
        <fullName evidence="1">Aspartate carbamoyltransferase catalytic subunit</fullName>
        <ecNumber evidence="1">2.1.3.2</ecNumber>
    </recommendedName>
    <alternativeName>
        <fullName evidence="1">Aspartate transcarbamylase</fullName>
        <shortName evidence="1">ATCase</shortName>
    </alternativeName>
</protein>
<proteinExistence type="inferred from homology"/>